<reference evidence="10" key="1">
    <citation type="journal article" date="2005" name="Nature">
        <title>Sequencing of Aspergillus nidulans and comparative analysis with A. fumigatus and A. oryzae.</title>
        <authorList>
            <person name="Galagan J.E."/>
            <person name="Calvo S.E."/>
            <person name="Cuomo C."/>
            <person name="Ma L.-J."/>
            <person name="Wortman J.R."/>
            <person name="Batzoglou S."/>
            <person name="Lee S.-I."/>
            <person name="Bastuerkmen M."/>
            <person name="Spevak C.C."/>
            <person name="Clutterbuck J."/>
            <person name="Kapitonov V."/>
            <person name="Jurka J."/>
            <person name="Scazzocchio C."/>
            <person name="Farman M.L."/>
            <person name="Butler J."/>
            <person name="Purcell S."/>
            <person name="Harris S."/>
            <person name="Braus G.H."/>
            <person name="Draht O."/>
            <person name="Busch S."/>
            <person name="D'Enfert C."/>
            <person name="Bouchier C."/>
            <person name="Goldman G.H."/>
            <person name="Bell-Pedersen D."/>
            <person name="Griffiths-Jones S."/>
            <person name="Doonan J.H."/>
            <person name="Yu J."/>
            <person name="Vienken K."/>
            <person name="Pain A."/>
            <person name="Freitag M."/>
            <person name="Selker E.U."/>
            <person name="Archer D.B."/>
            <person name="Penalva M.A."/>
            <person name="Oakley B.R."/>
            <person name="Momany M."/>
            <person name="Tanaka T."/>
            <person name="Kumagai T."/>
            <person name="Asai K."/>
            <person name="Machida M."/>
            <person name="Nierman W.C."/>
            <person name="Denning D.W."/>
            <person name="Caddick M.X."/>
            <person name="Hynes M."/>
            <person name="Paoletti M."/>
            <person name="Fischer R."/>
            <person name="Miller B.L."/>
            <person name="Dyer P.S."/>
            <person name="Sachs M.S."/>
            <person name="Osmani S.A."/>
            <person name="Birren B.W."/>
        </authorList>
    </citation>
    <scope>NUCLEOTIDE SEQUENCE [LARGE SCALE GENOMIC DNA]</scope>
    <source>
        <strain>FGSC A4 / ATCC 38163 / CBS 112.46 / NRRL 194 / M139</strain>
    </source>
</reference>
<reference evidence="10" key="2">
    <citation type="journal article" date="2009" name="Fungal Genet. Biol.">
        <title>The 2008 update of the Aspergillus nidulans genome annotation: a community effort.</title>
        <authorList>
            <person name="Wortman J.R."/>
            <person name="Gilsenan J.M."/>
            <person name="Joardar V."/>
            <person name="Deegan J."/>
            <person name="Clutterbuck J."/>
            <person name="Andersen M.R."/>
            <person name="Archer D."/>
            <person name="Bencina M."/>
            <person name="Braus G."/>
            <person name="Coutinho P."/>
            <person name="von Dohren H."/>
            <person name="Doonan J."/>
            <person name="Driessen A.J."/>
            <person name="Durek P."/>
            <person name="Espeso E."/>
            <person name="Fekete E."/>
            <person name="Flipphi M."/>
            <person name="Estrada C.G."/>
            <person name="Geysens S."/>
            <person name="Goldman G."/>
            <person name="de Groot P.W."/>
            <person name="Hansen K."/>
            <person name="Harris S.D."/>
            <person name="Heinekamp T."/>
            <person name="Helmstaedt K."/>
            <person name="Henrissat B."/>
            <person name="Hofmann G."/>
            <person name="Homan T."/>
            <person name="Horio T."/>
            <person name="Horiuchi H."/>
            <person name="James S."/>
            <person name="Jones M."/>
            <person name="Karaffa L."/>
            <person name="Karanyi Z."/>
            <person name="Kato M."/>
            <person name="Keller N."/>
            <person name="Kelly D.E."/>
            <person name="Kiel J.A."/>
            <person name="Kim J.M."/>
            <person name="van der Klei I.J."/>
            <person name="Klis F.M."/>
            <person name="Kovalchuk A."/>
            <person name="Krasevec N."/>
            <person name="Kubicek C.P."/>
            <person name="Liu B."/>
            <person name="Maccabe A."/>
            <person name="Meyer V."/>
            <person name="Mirabito P."/>
            <person name="Miskei M."/>
            <person name="Mos M."/>
            <person name="Mullins J."/>
            <person name="Nelson D.R."/>
            <person name="Nielsen J."/>
            <person name="Oakley B.R."/>
            <person name="Osmani S.A."/>
            <person name="Pakula T."/>
            <person name="Paszewski A."/>
            <person name="Paulsen I."/>
            <person name="Pilsyk S."/>
            <person name="Pocsi I."/>
            <person name="Punt P.J."/>
            <person name="Ram A.F."/>
            <person name="Ren Q."/>
            <person name="Robellet X."/>
            <person name="Robson G."/>
            <person name="Seiboth B."/>
            <person name="van Solingen P."/>
            <person name="Specht T."/>
            <person name="Sun J."/>
            <person name="Taheri-Talesh N."/>
            <person name="Takeshita N."/>
            <person name="Ussery D."/>
            <person name="vanKuyk P.A."/>
            <person name="Visser H."/>
            <person name="van de Vondervoort P.J."/>
            <person name="de Vries R.P."/>
            <person name="Walton J."/>
            <person name="Xiang X."/>
            <person name="Xiong Y."/>
            <person name="Zeng A.P."/>
            <person name="Brandt B.W."/>
            <person name="Cornell M.J."/>
            <person name="van den Hondel C.A."/>
            <person name="Visser J."/>
            <person name="Oliver S.G."/>
            <person name="Turner G."/>
        </authorList>
    </citation>
    <scope>GENOME REANNOTATION</scope>
    <source>
        <strain evidence="10">FGSC A4 / ATCC 38163 / CBS 112.46 / NRRL 194 / M139</strain>
    </source>
</reference>
<reference key="3">
    <citation type="journal article" date="2019" name="Appl. Microbiol. Biotechnol.">
        <title>Regulation of the cutinases expressed by Aspergillus nidulans and evaluation of their role in cutin degradation.</title>
        <authorList>
            <person name="Bermudez-Garcia E."/>
            <person name="Pena-Montes C."/>
            <person name="Martins I."/>
            <person name="Pais J."/>
            <person name="Pereira C.S."/>
            <person name="Sanchez S."/>
            <person name="Farres A."/>
        </authorList>
    </citation>
    <scope>INDUCTION</scope>
</reference>
<sequence length="223" mass="22699">MPLPLLPPLLLPLEALLDLALHLVDSTGVAYSARQVTPTAPLPRLRGSSTSNDVTDNSGCKELTFIFARGTTEIGNMGTVVGPKVGEALKSLTGNKAAIQGVDYPADAAGNAALGGSGGPKMASLVETALKQCPDTKIVLGGYSQGAMVVHNAASKLSSGQVVGAVTFGDPFKSQKPDNIDQFKTFCASGDPVCLNGANVMAHLSYGNDAQTAAQFLVSAAGL</sequence>
<comment type="function">
    <text evidence="3 4">Catalyzes the hydrolysis of complex carboxylic polyesters found in the cell wall of plants (By similarity). Degrades cutin, a macromolecule that forms the structure of the plant cuticle (By similarity). Also degrades suberin, a specialized macromolecule found in the cell wall of various plant tissues (By similarity).</text>
</comment>
<comment type="catalytic activity">
    <reaction evidence="6">
        <text>cutin + H2O = cutin monomers.</text>
        <dbReference type="EC" id="3.1.1.74"/>
    </reaction>
</comment>
<comment type="subcellular location">
    <subcellularLocation>
        <location evidence="6">Secreted</location>
    </subcellularLocation>
</comment>
<comment type="induction">
    <text evidence="7">Induced by oxidative stress, in a manner dependent on transcription factor napA.</text>
</comment>
<comment type="PTM">
    <text evidence="2">The 2 disulfide bonds play a critical role in holding the catalytic residues in juxta-position; reduction of the disulfide bridges results in the complete inactivation of the enzyme.</text>
</comment>
<comment type="similarity">
    <text evidence="6">Belongs to the cutinase family.</text>
</comment>
<feature type="signal peptide" evidence="5">
    <location>
        <begin position="1"/>
        <end position="26"/>
    </location>
</feature>
<feature type="chain" id="PRO_5005125857" description="Cutinase 4" evidence="5">
    <location>
        <begin position="27"/>
        <end position="223"/>
    </location>
</feature>
<feature type="active site" description="Nucleophile" evidence="1">
    <location>
        <position position="144"/>
    </location>
</feature>
<feature type="active site" evidence="1">
    <location>
        <position position="191"/>
    </location>
</feature>
<feature type="active site" description="Proton donor/acceptor" evidence="1">
    <location>
        <position position="203"/>
    </location>
</feature>
<feature type="site" description="Transition state stabilizer" evidence="1">
    <location>
        <position position="71"/>
    </location>
</feature>
<feature type="site" description="Transition state stabilizer" evidence="1">
    <location>
        <position position="145"/>
    </location>
</feature>
<feature type="disulfide bond" evidence="1">
    <location>
        <begin position="60"/>
        <end position="133"/>
    </location>
</feature>
<feature type="disulfide bond" evidence="1">
    <location>
        <begin position="187"/>
        <end position="194"/>
    </location>
</feature>
<gene>
    <name evidence="8" type="primary">cut4</name>
    <name evidence="9" type="ORF">ANIA_10346</name>
</gene>
<dbReference type="EC" id="3.1.1.74" evidence="6"/>
<dbReference type="EMBL" id="BN001306">
    <property type="protein sequence ID" value="CBF83913.1"/>
    <property type="molecule type" value="Genomic_DNA"/>
</dbReference>
<dbReference type="SMR" id="C8VJF5"/>
<dbReference type="ESTHER" id="emeni-q5b9e7">
    <property type="family name" value="Cutinase"/>
</dbReference>
<dbReference type="EnsemblFungi" id="CBF83913">
    <property type="protein sequence ID" value="CBF83913"/>
    <property type="gene ID" value="ANIA_10346"/>
</dbReference>
<dbReference type="VEuPathDB" id="FungiDB:AN10346"/>
<dbReference type="eggNOG" id="ENOG502S3AW">
    <property type="taxonomic scope" value="Eukaryota"/>
</dbReference>
<dbReference type="HOGENOM" id="CLU_040058_2_2_1"/>
<dbReference type="InParanoid" id="C8VJF5"/>
<dbReference type="OMA" id="FNTMAHI"/>
<dbReference type="OrthoDB" id="3225429at2759"/>
<dbReference type="Proteomes" id="UP000000560">
    <property type="component" value="Chromosome VI"/>
</dbReference>
<dbReference type="GO" id="GO:0005576">
    <property type="term" value="C:extracellular region"/>
    <property type="evidence" value="ECO:0007669"/>
    <property type="project" value="UniProtKB-SubCell"/>
</dbReference>
<dbReference type="GO" id="GO:0106435">
    <property type="term" value="F:carboxylesterase activity"/>
    <property type="evidence" value="ECO:0000318"/>
    <property type="project" value="GO_Central"/>
</dbReference>
<dbReference type="GO" id="GO:0050525">
    <property type="term" value="F:cutinase activity"/>
    <property type="evidence" value="ECO:0007669"/>
    <property type="project" value="UniProtKB-EC"/>
</dbReference>
<dbReference type="GO" id="GO:0016298">
    <property type="term" value="F:lipase activity"/>
    <property type="evidence" value="ECO:0000318"/>
    <property type="project" value="GO_Central"/>
</dbReference>
<dbReference type="GO" id="GO:0016042">
    <property type="term" value="P:lipid catabolic process"/>
    <property type="evidence" value="ECO:0000318"/>
    <property type="project" value="GO_Central"/>
</dbReference>
<dbReference type="Gene3D" id="3.40.50.1820">
    <property type="entry name" value="alpha/beta hydrolase"/>
    <property type="match status" value="1"/>
</dbReference>
<dbReference type="InterPro" id="IPR029058">
    <property type="entry name" value="AB_hydrolase_fold"/>
</dbReference>
<dbReference type="InterPro" id="IPR000675">
    <property type="entry name" value="Cutinase/axe"/>
</dbReference>
<dbReference type="InterPro" id="IPR043580">
    <property type="entry name" value="CUTINASE_1"/>
</dbReference>
<dbReference type="InterPro" id="IPR011150">
    <property type="entry name" value="Cutinase_monf"/>
</dbReference>
<dbReference type="PANTHER" id="PTHR48250:SF2">
    <property type="entry name" value="CUTINASE"/>
    <property type="match status" value="1"/>
</dbReference>
<dbReference type="PANTHER" id="PTHR48250">
    <property type="entry name" value="CUTINASE 2-RELATED"/>
    <property type="match status" value="1"/>
</dbReference>
<dbReference type="Pfam" id="PF01083">
    <property type="entry name" value="Cutinase"/>
    <property type="match status" value="1"/>
</dbReference>
<dbReference type="SMART" id="SM01110">
    <property type="entry name" value="Cutinase"/>
    <property type="match status" value="1"/>
</dbReference>
<dbReference type="SUPFAM" id="SSF53474">
    <property type="entry name" value="alpha/beta-Hydrolases"/>
    <property type="match status" value="1"/>
</dbReference>
<dbReference type="PROSITE" id="PS00155">
    <property type="entry name" value="CUTINASE_1"/>
    <property type="match status" value="1"/>
</dbReference>
<proteinExistence type="evidence at transcript level"/>
<name>CUTI4_EMENI</name>
<organism evidence="10">
    <name type="scientific">Emericella nidulans (strain FGSC A4 / ATCC 38163 / CBS 112.46 / NRRL 194 / M139)</name>
    <name type="common">Aspergillus nidulans</name>
    <dbReference type="NCBI Taxonomy" id="227321"/>
    <lineage>
        <taxon>Eukaryota</taxon>
        <taxon>Fungi</taxon>
        <taxon>Dikarya</taxon>
        <taxon>Ascomycota</taxon>
        <taxon>Pezizomycotina</taxon>
        <taxon>Eurotiomycetes</taxon>
        <taxon>Eurotiomycetidae</taxon>
        <taxon>Eurotiales</taxon>
        <taxon>Aspergillaceae</taxon>
        <taxon>Aspergillus</taxon>
        <taxon>Aspergillus subgen. Nidulantes</taxon>
    </lineage>
</organism>
<accession>C8VJF5</accession>
<protein>
    <recommendedName>
        <fullName evidence="8">Cutinase 4</fullName>
        <ecNumber evidence="6">3.1.1.74</ecNumber>
    </recommendedName>
    <alternativeName>
        <fullName evidence="8">Ancut4</fullName>
    </alternativeName>
</protein>
<evidence type="ECO:0000250" key="1">
    <source>
        <dbReference type="UniProtKB" id="P00590"/>
    </source>
</evidence>
<evidence type="ECO:0000250" key="2">
    <source>
        <dbReference type="UniProtKB" id="P11373"/>
    </source>
</evidence>
<evidence type="ECO:0000250" key="3">
    <source>
        <dbReference type="UniProtKB" id="Q5AVY9"/>
    </source>
</evidence>
<evidence type="ECO:0000250" key="4">
    <source>
        <dbReference type="UniProtKB" id="Q5B2C1"/>
    </source>
</evidence>
<evidence type="ECO:0000255" key="5"/>
<evidence type="ECO:0000255" key="6">
    <source>
        <dbReference type="RuleBase" id="RU361263"/>
    </source>
</evidence>
<evidence type="ECO:0000269" key="7">
    <source>
    </source>
</evidence>
<evidence type="ECO:0000303" key="8">
    <source>
    </source>
</evidence>
<evidence type="ECO:0000312" key="9">
    <source>
        <dbReference type="EMBL" id="CBF83913.1"/>
    </source>
</evidence>
<evidence type="ECO:0000312" key="10">
    <source>
        <dbReference type="Proteomes" id="UP000000560"/>
    </source>
</evidence>
<keyword id="KW-1015">Disulfide bond</keyword>
<keyword id="KW-0378">Hydrolase</keyword>
<keyword id="KW-1185">Reference proteome</keyword>
<keyword id="KW-0964">Secreted</keyword>
<keyword id="KW-0719">Serine esterase</keyword>
<keyword id="KW-0732">Signal</keyword>